<reference key="1">
    <citation type="submission" date="2006-02" db="EMBL/GenBank/DDBJ databases">
        <title>Complete sequence of chromosome of Jannaschia sp. CCS1.</title>
        <authorList>
            <consortium name="US DOE Joint Genome Institute"/>
            <person name="Copeland A."/>
            <person name="Lucas S."/>
            <person name="Lapidus A."/>
            <person name="Barry K."/>
            <person name="Detter J.C."/>
            <person name="Glavina del Rio T."/>
            <person name="Hammon N."/>
            <person name="Israni S."/>
            <person name="Pitluck S."/>
            <person name="Brettin T."/>
            <person name="Bruce D."/>
            <person name="Han C."/>
            <person name="Tapia R."/>
            <person name="Gilna P."/>
            <person name="Chertkov O."/>
            <person name="Saunders E."/>
            <person name="Schmutz J."/>
            <person name="Larimer F."/>
            <person name="Land M."/>
            <person name="Kyrpides N."/>
            <person name="Lykidis A."/>
            <person name="Moran M.A."/>
            <person name="Belas R."/>
            <person name="Ye W."/>
            <person name="Buchan A."/>
            <person name="Gonzalez J.M."/>
            <person name="Schell M.A."/>
            <person name="Richardson P."/>
        </authorList>
    </citation>
    <scope>NUCLEOTIDE SEQUENCE [LARGE SCALE GENOMIC DNA]</scope>
    <source>
        <strain>CCS1</strain>
    </source>
</reference>
<sequence length="368" mass="37655">MASLTGAKRVVVKIGSALLVDRHTGDLRADWLAALADDIAALKGAGTDVILVSSGAIALGRGVLALGDGALSLDEAQAAAAVGQIRLARAYEEVLAPLGLTSAQILLTLDDSADRRRYLNTRATFAALLARGAVPIVNENDTIATDEIRYGDNDRLAANVAVMAGADICVLLSDVDGLYTANPNDDTTAAHLPVIDTITPEIEAMAGDAGSGLSKGGMKTKVLAARTATAAGCAMAITQGAIANPLRALDDGARATWFTATVSPQQARKAWIGAMKPKGSLRLDAGAAAALSRGKSLLPAGVVAVTGDFLRGDPVRLEAPDGAAIGIGLSRYGAKEALAIQGHQSDEIPEILGYPGRAALVHRDDMVL</sequence>
<name>PROB_JANSC</name>
<dbReference type="EC" id="2.7.2.11" evidence="1"/>
<dbReference type="EMBL" id="CP000264">
    <property type="protein sequence ID" value="ABD55201.1"/>
    <property type="molecule type" value="Genomic_DNA"/>
</dbReference>
<dbReference type="RefSeq" id="WP_011455405.1">
    <property type="nucleotide sequence ID" value="NC_007802.1"/>
</dbReference>
<dbReference type="SMR" id="Q28Q11"/>
<dbReference type="STRING" id="290400.Jann_2284"/>
<dbReference type="KEGG" id="jan:Jann_2284"/>
<dbReference type="eggNOG" id="COG0263">
    <property type="taxonomic scope" value="Bacteria"/>
</dbReference>
<dbReference type="HOGENOM" id="CLU_025400_2_0_5"/>
<dbReference type="OrthoDB" id="9804434at2"/>
<dbReference type="UniPathway" id="UPA00098">
    <property type="reaction ID" value="UER00359"/>
</dbReference>
<dbReference type="Proteomes" id="UP000008326">
    <property type="component" value="Chromosome"/>
</dbReference>
<dbReference type="GO" id="GO:0005829">
    <property type="term" value="C:cytosol"/>
    <property type="evidence" value="ECO:0007669"/>
    <property type="project" value="TreeGrafter"/>
</dbReference>
<dbReference type="GO" id="GO:0005524">
    <property type="term" value="F:ATP binding"/>
    <property type="evidence" value="ECO:0007669"/>
    <property type="project" value="UniProtKB-KW"/>
</dbReference>
<dbReference type="GO" id="GO:0004349">
    <property type="term" value="F:glutamate 5-kinase activity"/>
    <property type="evidence" value="ECO:0007669"/>
    <property type="project" value="UniProtKB-UniRule"/>
</dbReference>
<dbReference type="GO" id="GO:0003723">
    <property type="term" value="F:RNA binding"/>
    <property type="evidence" value="ECO:0007669"/>
    <property type="project" value="InterPro"/>
</dbReference>
<dbReference type="GO" id="GO:0055129">
    <property type="term" value="P:L-proline biosynthetic process"/>
    <property type="evidence" value="ECO:0007669"/>
    <property type="project" value="UniProtKB-UniRule"/>
</dbReference>
<dbReference type="CDD" id="cd04242">
    <property type="entry name" value="AAK_G5K_ProB"/>
    <property type="match status" value="1"/>
</dbReference>
<dbReference type="CDD" id="cd21157">
    <property type="entry name" value="PUA_G5K"/>
    <property type="match status" value="1"/>
</dbReference>
<dbReference type="FunFam" id="3.40.1160.10:FF:000018">
    <property type="entry name" value="Glutamate 5-kinase"/>
    <property type="match status" value="1"/>
</dbReference>
<dbReference type="Gene3D" id="3.40.1160.10">
    <property type="entry name" value="Acetylglutamate kinase-like"/>
    <property type="match status" value="1"/>
</dbReference>
<dbReference type="Gene3D" id="2.30.130.10">
    <property type="entry name" value="PUA domain"/>
    <property type="match status" value="1"/>
</dbReference>
<dbReference type="HAMAP" id="MF_00456">
    <property type="entry name" value="ProB"/>
    <property type="match status" value="1"/>
</dbReference>
<dbReference type="InterPro" id="IPR036393">
    <property type="entry name" value="AceGlu_kinase-like_sf"/>
</dbReference>
<dbReference type="InterPro" id="IPR001048">
    <property type="entry name" value="Asp/Glu/Uridylate_kinase"/>
</dbReference>
<dbReference type="InterPro" id="IPR041739">
    <property type="entry name" value="G5K_ProB"/>
</dbReference>
<dbReference type="InterPro" id="IPR001057">
    <property type="entry name" value="Glu/AcGlu_kinase"/>
</dbReference>
<dbReference type="InterPro" id="IPR011529">
    <property type="entry name" value="Glu_5kinase"/>
</dbReference>
<dbReference type="InterPro" id="IPR005715">
    <property type="entry name" value="Glu_5kinase/COase_Synthase"/>
</dbReference>
<dbReference type="InterPro" id="IPR019797">
    <property type="entry name" value="Glutamate_5-kinase_CS"/>
</dbReference>
<dbReference type="InterPro" id="IPR002478">
    <property type="entry name" value="PUA"/>
</dbReference>
<dbReference type="InterPro" id="IPR015947">
    <property type="entry name" value="PUA-like_sf"/>
</dbReference>
<dbReference type="InterPro" id="IPR036974">
    <property type="entry name" value="PUA_sf"/>
</dbReference>
<dbReference type="NCBIfam" id="TIGR01027">
    <property type="entry name" value="proB"/>
    <property type="match status" value="1"/>
</dbReference>
<dbReference type="PANTHER" id="PTHR43654">
    <property type="entry name" value="GLUTAMATE 5-KINASE"/>
    <property type="match status" value="1"/>
</dbReference>
<dbReference type="PANTHER" id="PTHR43654:SF1">
    <property type="entry name" value="ISOPENTENYL PHOSPHATE KINASE"/>
    <property type="match status" value="1"/>
</dbReference>
<dbReference type="Pfam" id="PF00696">
    <property type="entry name" value="AA_kinase"/>
    <property type="match status" value="1"/>
</dbReference>
<dbReference type="Pfam" id="PF01472">
    <property type="entry name" value="PUA"/>
    <property type="match status" value="1"/>
</dbReference>
<dbReference type="PIRSF" id="PIRSF000729">
    <property type="entry name" value="GK"/>
    <property type="match status" value="1"/>
</dbReference>
<dbReference type="PRINTS" id="PR00474">
    <property type="entry name" value="GLU5KINASE"/>
</dbReference>
<dbReference type="SMART" id="SM00359">
    <property type="entry name" value="PUA"/>
    <property type="match status" value="1"/>
</dbReference>
<dbReference type="SUPFAM" id="SSF53633">
    <property type="entry name" value="Carbamate kinase-like"/>
    <property type="match status" value="1"/>
</dbReference>
<dbReference type="SUPFAM" id="SSF88697">
    <property type="entry name" value="PUA domain-like"/>
    <property type="match status" value="1"/>
</dbReference>
<dbReference type="PROSITE" id="PS00902">
    <property type="entry name" value="GLUTAMATE_5_KINASE"/>
    <property type="match status" value="1"/>
</dbReference>
<dbReference type="PROSITE" id="PS50890">
    <property type="entry name" value="PUA"/>
    <property type="match status" value="1"/>
</dbReference>
<gene>
    <name evidence="1" type="primary">proB</name>
    <name type="ordered locus">Jann_2284</name>
</gene>
<evidence type="ECO:0000255" key="1">
    <source>
        <dbReference type="HAMAP-Rule" id="MF_00456"/>
    </source>
</evidence>
<feature type="chain" id="PRO_0000252982" description="Glutamate 5-kinase">
    <location>
        <begin position="1"/>
        <end position="368"/>
    </location>
</feature>
<feature type="domain" description="PUA" evidence="1">
    <location>
        <begin position="278"/>
        <end position="355"/>
    </location>
</feature>
<feature type="binding site" evidence="1">
    <location>
        <position position="13"/>
    </location>
    <ligand>
        <name>ATP</name>
        <dbReference type="ChEBI" id="CHEBI:30616"/>
    </ligand>
</feature>
<feature type="binding site" evidence="1">
    <location>
        <position position="54"/>
    </location>
    <ligand>
        <name>substrate</name>
    </ligand>
</feature>
<feature type="binding site" evidence="1">
    <location>
        <position position="141"/>
    </location>
    <ligand>
        <name>substrate</name>
    </ligand>
</feature>
<feature type="binding site" evidence="1">
    <location>
        <position position="153"/>
    </location>
    <ligand>
        <name>substrate</name>
    </ligand>
</feature>
<feature type="binding site" evidence="1">
    <location>
        <begin position="173"/>
        <end position="174"/>
    </location>
    <ligand>
        <name>ATP</name>
        <dbReference type="ChEBI" id="CHEBI:30616"/>
    </ligand>
</feature>
<comment type="function">
    <text evidence="1">Catalyzes the transfer of a phosphate group to glutamate to form L-glutamate 5-phosphate.</text>
</comment>
<comment type="catalytic activity">
    <reaction evidence="1">
        <text>L-glutamate + ATP = L-glutamyl 5-phosphate + ADP</text>
        <dbReference type="Rhea" id="RHEA:14877"/>
        <dbReference type="ChEBI" id="CHEBI:29985"/>
        <dbReference type="ChEBI" id="CHEBI:30616"/>
        <dbReference type="ChEBI" id="CHEBI:58274"/>
        <dbReference type="ChEBI" id="CHEBI:456216"/>
        <dbReference type="EC" id="2.7.2.11"/>
    </reaction>
</comment>
<comment type="pathway">
    <text evidence="1">Amino-acid biosynthesis; L-proline biosynthesis; L-glutamate 5-semialdehyde from L-glutamate: step 1/2.</text>
</comment>
<comment type="subcellular location">
    <subcellularLocation>
        <location evidence="1">Cytoplasm</location>
    </subcellularLocation>
</comment>
<comment type="similarity">
    <text evidence="1">Belongs to the glutamate 5-kinase family.</text>
</comment>
<proteinExistence type="inferred from homology"/>
<protein>
    <recommendedName>
        <fullName evidence="1">Glutamate 5-kinase</fullName>
        <ecNumber evidence="1">2.7.2.11</ecNumber>
    </recommendedName>
    <alternativeName>
        <fullName evidence="1">Gamma-glutamyl kinase</fullName>
        <shortName evidence="1">GK</shortName>
    </alternativeName>
</protein>
<keyword id="KW-0028">Amino-acid biosynthesis</keyword>
<keyword id="KW-0067">ATP-binding</keyword>
<keyword id="KW-0963">Cytoplasm</keyword>
<keyword id="KW-0418">Kinase</keyword>
<keyword id="KW-0547">Nucleotide-binding</keyword>
<keyword id="KW-0641">Proline biosynthesis</keyword>
<keyword id="KW-1185">Reference proteome</keyword>
<keyword id="KW-0808">Transferase</keyword>
<accession>Q28Q11</accession>
<organism>
    <name type="scientific">Jannaschia sp. (strain CCS1)</name>
    <dbReference type="NCBI Taxonomy" id="290400"/>
    <lineage>
        <taxon>Bacteria</taxon>
        <taxon>Pseudomonadati</taxon>
        <taxon>Pseudomonadota</taxon>
        <taxon>Alphaproteobacteria</taxon>
        <taxon>Rhodobacterales</taxon>
        <taxon>Roseobacteraceae</taxon>
        <taxon>Jannaschia</taxon>
    </lineage>
</organism>